<keyword id="KW-0479">Metal-binding</keyword>
<keyword id="KW-1185">Reference proteome</keyword>
<keyword id="KW-0687">Ribonucleoprotein</keyword>
<keyword id="KW-0689">Ribosomal protein</keyword>
<keyword id="KW-0694">RNA-binding</keyword>
<keyword id="KW-0699">rRNA-binding</keyword>
<keyword id="KW-0862">Zinc</keyword>
<proteinExistence type="inferred from homology"/>
<comment type="function">
    <text evidence="1">Binds 16S rRNA, required for the assembly of 30S particles and may also be responsible for determining the conformation of the 16S rRNA at the A site.</text>
</comment>
<comment type="cofactor">
    <cofactor evidence="1">
        <name>Zn(2+)</name>
        <dbReference type="ChEBI" id="CHEBI:29105"/>
    </cofactor>
    <text evidence="1">Binds 1 zinc ion per subunit.</text>
</comment>
<comment type="subunit">
    <text evidence="1">Part of the 30S ribosomal subunit. Contacts proteins S3 and S10.</text>
</comment>
<comment type="similarity">
    <text evidence="1">Belongs to the universal ribosomal protein uS14 family. Zinc-binding uS14 subfamily.</text>
</comment>
<evidence type="ECO:0000255" key="1">
    <source>
        <dbReference type="HAMAP-Rule" id="MF_01364"/>
    </source>
</evidence>
<evidence type="ECO:0000305" key="2"/>
<gene>
    <name evidence="1" type="primary">rpsZ</name>
    <name evidence="1" type="synonym">rpsN</name>
    <name type="ordered locus">TP_0202</name>
</gene>
<organism>
    <name type="scientific">Treponema pallidum (strain Nichols)</name>
    <dbReference type="NCBI Taxonomy" id="243276"/>
    <lineage>
        <taxon>Bacteria</taxon>
        <taxon>Pseudomonadati</taxon>
        <taxon>Spirochaetota</taxon>
        <taxon>Spirochaetia</taxon>
        <taxon>Spirochaetales</taxon>
        <taxon>Treponemataceae</taxon>
        <taxon>Treponema</taxon>
    </lineage>
</organism>
<accession>O83232</accession>
<sequence length="61" mass="6986">MATVAMINKAKATPKYATRRYNRCGVCGRPRGYMRRFQLCRLCFRKLASEGQIPGVTKSSW</sequence>
<reference key="1">
    <citation type="journal article" date="1998" name="Science">
        <title>Complete genome sequence of Treponema pallidum, the syphilis spirochete.</title>
        <authorList>
            <person name="Fraser C.M."/>
            <person name="Norris S.J."/>
            <person name="Weinstock G.M."/>
            <person name="White O."/>
            <person name="Sutton G.G."/>
            <person name="Dodson R.J."/>
            <person name="Gwinn M.L."/>
            <person name="Hickey E.K."/>
            <person name="Clayton R.A."/>
            <person name="Ketchum K.A."/>
            <person name="Sodergren E."/>
            <person name="Hardham J.M."/>
            <person name="McLeod M.P."/>
            <person name="Salzberg S.L."/>
            <person name="Peterson J.D."/>
            <person name="Khalak H.G."/>
            <person name="Richardson D.L."/>
            <person name="Howell J.K."/>
            <person name="Chidambaram M."/>
            <person name="Utterback T.R."/>
            <person name="McDonald L.A."/>
            <person name="Artiach P."/>
            <person name="Bowman C."/>
            <person name="Cotton M.D."/>
            <person name="Fujii C."/>
            <person name="Garland S.A."/>
            <person name="Hatch B."/>
            <person name="Horst K."/>
            <person name="Roberts K.M."/>
            <person name="Sandusky M."/>
            <person name="Weidman J.F."/>
            <person name="Smith H.O."/>
            <person name="Venter J.C."/>
        </authorList>
    </citation>
    <scope>NUCLEOTIDE SEQUENCE [LARGE SCALE GENOMIC DNA]</scope>
    <source>
        <strain>Nichols</strain>
    </source>
</reference>
<feature type="chain" id="PRO_0000130957" description="Small ribosomal subunit protein uS14">
    <location>
        <begin position="1"/>
        <end position="61"/>
    </location>
</feature>
<feature type="binding site" evidence="1">
    <location>
        <position position="24"/>
    </location>
    <ligand>
        <name>Zn(2+)</name>
        <dbReference type="ChEBI" id="CHEBI:29105"/>
    </ligand>
</feature>
<feature type="binding site" evidence="1">
    <location>
        <position position="27"/>
    </location>
    <ligand>
        <name>Zn(2+)</name>
        <dbReference type="ChEBI" id="CHEBI:29105"/>
    </ligand>
</feature>
<feature type="binding site" evidence="1">
    <location>
        <position position="40"/>
    </location>
    <ligand>
        <name>Zn(2+)</name>
        <dbReference type="ChEBI" id="CHEBI:29105"/>
    </ligand>
</feature>
<feature type="binding site" evidence="1">
    <location>
        <position position="43"/>
    </location>
    <ligand>
        <name>Zn(2+)</name>
        <dbReference type="ChEBI" id="CHEBI:29105"/>
    </ligand>
</feature>
<dbReference type="EMBL" id="AE000520">
    <property type="protein sequence ID" value="AAC65191.1"/>
    <property type="molecule type" value="Genomic_DNA"/>
</dbReference>
<dbReference type="PIR" id="D71356">
    <property type="entry name" value="D71356"/>
</dbReference>
<dbReference type="RefSeq" id="WP_010881649.1">
    <property type="nucleotide sequence ID" value="NC_021490.2"/>
</dbReference>
<dbReference type="SMR" id="O83232"/>
<dbReference type="IntAct" id="O83232">
    <property type="interactions" value="4"/>
</dbReference>
<dbReference type="STRING" id="243276.TP_0202"/>
<dbReference type="EnsemblBacteria" id="AAC65191">
    <property type="protein sequence ID" value="AAC65191"/>
    <property type="gene ID" value="TP_0202"/>
</dbReference>
<dbReference type="KEGG" id="tpa:TP_0202"/>
<dbReference type="KEGG" id="tpw:TPANIC_0202"/>
<dbReference type="eggNOG" id="COG0199">
    <property type="taxonomic scope" value="Bacteria"/>
</dbReference>
<dbReference type="HOGENOM" id="CLU_139869_3_0_12"/>
<dbReference type="OrthoDB" id="9810484at2"/>
<dbReference type="Proteomes" id="UP000000811">
    <property type="component" value="Chromosome"/>
</dbReference>
<dbReference type="GO" id="GO:0005737">
    <property type="term" value="C:cytoplasm"/>
    <property type="evidence" value="ECO:0007669"/>
    <property type="project" value="UniProtKB-ARBA"/>
</dbReference>
<dbReference type="GO" id="GO:0015935">
    <property type="term" value="C:small ribosomal subunit"/>
    <property type="evidence" value="ECO:0007669"/>
    <property type="project" value="TreeGrafter"/>
</dbReference>
<dbReference type="GO" id="GO:0019843">
    <property type="term" value="F:rRNA binding"/>
    <property type="evidence" value="ECO:0007669"/>
    <property type="project" value="UniProtKB-UniRule"/>
</dbReference>
<dbReference type="GO" id="GO:0003735">
    <property type="term" value="F:structural constituent of ribosome"/>
    <property type="evidence" value="ECO:0007669"/>
    <property type="project" value="InterPro"/>
</dbReference>
<dbReference type="GO" id="GO:0008270">
    <property type="term" value="F:zinc ion binding"/>
    <property type="evidence" value="ECO:0007669"/>
    <property type="project" value="UniProtKB-UniRule"/>
</dbReference>
<dbReference type="GO" id="GO:0006412">
    <property type="term" value="P:translation"/>
    <property type="evidence" value="ECO:0007669"/>
    <property type="project" value="UniProtKB-UniRule"/>
</dbReference>
<dbReference type="FunFam" id="4.10.830.10:FF:000001">
    <property type="entry name" value="30S ribosomal protein S14 type Z"/>
    <property type="match status" value="1"/>
</dbReference>
<dbReference type="Gene3D" id="4.10.830.10">
    <property type="entry name" value="30s Ribosomal Protein S14, Chain N"/>
    <property type="match status" value="1"/>
</dbReference>
<dbReference type="HAMAP" id="MF_01364_B">
    <property type="entry name" value="Ribosomal_uS14_2_B"/>
    <property type="match status" value="1"/>
</dbReference>
<dbReference type="InterPro" id="IPR001209">
    <property type="entry name" value="Ribosomal_uS14"/>
</dbReference>
<dbReference type="InterPro" id="IPR023053">
    <property type="entry name" value="Ribosomal_uS14_bact"/>
</dbReference>
<dbReference type="InterPro" id="IPR018271">
    <property type="entry name" value="Ribosomal_uS14_CS"/>
</dbReference>
<dbReference type="InterPro" id="IPR043140">
    <property type="entry name" value="Ribosomal_uS14_sf"/>
</dbReference>
<dbReference type="NCBIfam" id="NF005974">
    <property type="entry name" value="PRK08061.1"/>
    <property type="match status" value="1"/>
</dbReference>
<dbReference type="PANTHER" id="PTHR19836">
    <property type="entry name" value="30S RIBOSOMAL PROTEIN S14"/>
    <property type="match status" value="1"/>
</dbReference>
<dbReference type="PANTHER" id="PTHR19836:SF19">
    <property type="entry name" value="SMALL RIBOSOMAL SUBUNIT PROTEIN US14M"/>
    <property type="match status" value="1"/>
</dbReference>
<dbReference type="Pfam" id="PF00253">
    <property type="entry name" value="Ribosomal_S14"/>
    <property type="match status" value="1"/>
</dbReference>
<dbReference type="SUPFAM" id="SSF57716">
    <property type="entry name" value="Glucocorticoid receptor-like (DNA-binding domain)"/>
    <property type="match status" value="1"/>
</dbReference>
<dbReference type="PROSITE" id="PS00527">
    <property type="entry name" value="RIBOSOMAL_S14"/>
    <property type="match status" value="1"/>
</dbReference>
<name>RS14Z_TREPA</name>
<protein>
    <recommendedName>
        <fullName evidence="1">Small ribosomal subunit protein uS14</fullName>
    </recommendedName>
    <alternativeName>
        <fullName evidence="2">30S ribosomal protein S14 type Z</fullName>
    </alternativeName>
</protein>